<proteinExistence type="evidence at transcript level"/>
<protein>
    <recommendedName>
        <fullName evidence="6">Dermonecrotic toxin LruSicTox-alphaIV1</fullName>
        <ecNumber evidence="4">4.6.1.-</ecNumber>
    </recommendedName>
    <alternativeName>
        <fullName>Phospholipase D</fullName>
        <shortName>PLD</shortName>
    </alternativeName>
    <alternativeName>
        <fullName>Sphingomyelin phosphodiesterase D</fullName>
        <shortName>SMD</shortName>
        <shortName>SMase D</shortName>
        <shortName>Sphingomyelinase D</shortName>
    </alternativeName>
</protein>
<feature type="chain" id="PRO_0000392838" description="Dermonecrotic toxin LruSicTox-alphaIV1">
    <location>
        <begin position="1" status="less than"/>
        <end position="275"/>
    </location>
</feature>
<feature type="active site" evidence="5">
    <location>
        <position position="5"/>
    </location>
</feature>
<feature type="active site" description="Nucleophile" evidence="5">
    <location>
        <position position="41"/>
    </location>
</feature>
<feature type="binding site" evidence="5">
    <location>
        <position position="25"/>
    </location>
    <ligand>
        <name>Mg(2+)</name>
        <dbReference type="ChEBI" id="CHEBI:18420"/>
    </ligand>
</feature>
<feature type="binding site" evidence="5">
    <location>
        <position position="27"/>
    </location>
    <ligand>
        <name>Mg(2+)</name>
        <dbReference type="ChEBI" id="CHEBI:18420"/>
    </ligand>
</feature>
<feature type="binding site" evidence="5">
    <location>
        <position position="85"/>
    </location>
    <ligand>
        <name>Mg(2+)</name>
        <dbReference type="ChEBI" id="CHEBI:18420"/>
    </ligand>
</feature>
<feature type="disulfide bond" evidence="3">
    <location>
        <begin position="45"/>
        <end position="51"/>
    </location>
</feature>
<feature type="disulfide bond" evidence="3">
    <location>
        <begin position="47"/>
        <end position="192"/>
    </location>
</feature>
<feature type="non-terminal residue">
    <location>
        <position position="1"/>
    </location>
</feature>
<organism>
    <name type="scientific">Loxosceles rufescens</name>
    <name type="common">Mediterranean recluse spider</name>
    <name type="synonym">Scytodes rufescens</name>
    <dbReference type="NCBI Taxonomy" id="571528"/>
    <lineage>
        <taxon>Eukaryota</taxon>
        <taxon>Metazoa</taxon>
        <taxon>Ecdysozoa</taxon>
        <taxon>Arthropoda</taxon>
        <taxon>Chelicerata</taxon>
        <taxon>Arachnida</taxon>
        <taxon>Araneae</taxon>
        <taxon>Araneomorphae</taxon>
        <taxon>Haplogynae</taxon>
        <taxon>Scytodoidea</taxon>
        <taxon>Sicariidae</taxon>
        <taxon>Loxosceles</taxon>
    </lineage>
</organism>
<keyword id="KW-0204">Cytolysis</keyword>
<keyword id="KW-1061">Dermonecrotic toxin</keyword>
<keyword id="KW-1015">Disulfide bond</keyword>
<keyword id="KW-0354">Hemolysis</keyword>
<keyword id="KW-0442">Lipid degradation</keyword>
<keyword id="KW-0443">Lipid metabolism</keyword>
<keyword id="KW-0456">Lyase</keyword>
<keyword id="KW-0460">Magnesium</keyword>
<keyword id="KW-0479">Metal-binding</keyword>
<keyword id="KW-0964">Secreted</keyword>
<keyword id="KW-0800">Toxin</keyword>
<accession>C0JB21</accession>
<dbReference type="EC" id="4.6.1.-" evidence="4"/>
<dbReference type="EMBL" id="FJ171456">
    <property type="protein sequence ID" value="ACN48952.1"/>
    <property type="molecule type" value="mRNA"/>
</dbReference>
<dbReference type="SMR" id="C0JB21"/>
<dbReference type="GO" id="GO:0005576">
    <property type="term" value="C:extracellular region"/>
    <property type="evidence" value="ECO:0007669"/>
    <property type="project" value="UniProtKB-SubCell"/>
</dbReference>
<dbReference type="GO" id="GO:0016829">
    <property type="term" value="F:lyase activity"/>
    <property type="evidence" value="ECO:0007669"/>
    <property type="project" value="UniProtKB-KW"/>
</dbReference>
<dbReference type="GO" id="GO:0046872">
    <property type="term" value="F:metal ion binding"/>
    <property type="evidence" value="ECO:0007669"/>
    <property type="project" value="UniProtKB-KW"/>
</dbReference>
<dbReference type="GO" id="GO:0008081">
    <property type="term" value="F:phosphoric diester hydrolase activity"/>
    <property type="evidence" value="ECO:0007669"/>
    <property type="project" value="InterPro"/>
</dbReference>
<dbReference type="GO" id="GO:0090729">
    <property type="term" value="F:toxin activity"/>
    <property type="evidence" value="ECO:0007669"/>
    <property type="project" value="UniProtKB-KW"/>
</dbReference>
<dbReference type="GO" id="GO:0031640">
    <property type="term" value="P:killing of cells of another organism"/>
    <property type="evidence" value="ECO:0007669"/>
    <property type="project" value="UniProtKB-KW"/>
</dbReference>
<dbReference type="GO" id="GO:0016042">
    <property type="term" value="P:lipid catabolic process"/>
    <property type="evidence" value="ECO:0007669"/>
    <property type="project" value="UniProtKB-KW"/>
</dbReference>
<dbReference type="CDD" id="cd08576">
    <property type="entry name" value="GDPD_like_SMaseD_PLD"/>
    <property type="match status" value="1"/>
</dbReference>
<dbReference type="Gene3D" id="3.20.20.190">
    <property type="entry name" value="Phosphatidylinositol (PI) phosphodiesterase"/>
    <property type="match status" value="1"/>
</dbReference>
<dbReference type="InterPro" id="IPR017946">
    <property type="entry name" value="PLC-like_Pdiesterase_TIM-brl"/>
</dbReference>
<dbReference type="SUPFAM" id="SSF51695">
    <property type="entry name" value="PLC-like phosphodiesterases"/>
    <property type="match status" value="1"/>
</dbReference>
<evidence type="ECO:0000250" key="1">
    <source>
        <dbReference type="UniProtKB" id="A0A0D4WTV1"/>
    </source>
</evidence>
<evidence type="ECO:0000250" key="2">
    <source>
        <dbReference type="UniProtKB" id="A0A0D4WV12"/>
    </source>
</evidence>
<evidence type="ECO:0000250" key="3">
    <source>
        <dbReference type="UniProtKB" id="P0CE80"/>
    </source>
</evidence>
<evidence type="ECO:0000250" key="4">
    <source>
        <dbReference type="UniProtKB" id="Q4ZFU2"/>
    </source>
</evidence>
<evidence type="ECO:0000250" key="5">
    <source>
        <dbReference type="UniProtKB" id="Q8I914"/>
    </source>
</evidence>
<evidence type="ECO:0000303" key="6">
    <source>
    </source>
</evidence>
<evidence type="ECO:0000305" key="7"/>
<evidence type="ECO:0000305" key="8">
    <source>
    </source>
</evidence>
<reference key="1">
    <citation type="journal article" date="2009" name="Mol. Biol. Evol.">
        <title>Molecular evolution, functional variation, and proposed nomenclature of the gene family that includes sphingomyelinase D in sicariid spider venoms.</title>
        <authorList>
            <person name="Binford G.J."/>
            <person name="Bodner M.R."/>
            <person name="Cordes M.H."/>
            <person name="Baldwin K.L."/>
            <person name="Rynerson M.R."/>
            <person name="Burns S.N."/>
            <person name="Zobel-Thropp P.A."/>
        </authorList>
    </citation>
    <scope>NUCLEOTIDE SEQUENCE [MRNA]</scope>
    <scope>NOMENCLATURE</scope>
    <source>
        <tissue>Venom gland</tissue>
    </source>
</reference>
<comment type="function">
    <text evidence="1 3">Dermonecrotic toxins cleave the phosphodiester linkage between the phosphate and headgroup of certain phospholipids (sphingolipid and lysolipid substrates), forming an alcohol (often choline) and a cyclic phosphate (By similarity). This toxin acts on sphingomyelin (SM) (By similarity). It may also act on ceramide phosphoethanolamine (CPE), lysophosphatidylcholine (LPC) and lysophosphatidylethanolamine (LPE), but not on lysophosphatidylserine (LPS), and lysophosphatidylglycerol (LPG) (By similarity). It acts by transphosphatidylation, releasing exclusively cyclic phosphate products as second products (By similarity). Induces dermonecrosis, hemolysis, increased vascular permeability, edema, inflammatory response, and platelet aggregation (By similarity).</text>
</comment>
<comment type="catalytic activity">
    <reaction evidence="1">
        <text>an N-(acyl)-sphingosylphosphocholine = an N-(acyl)-sphingosyl-1,3-cyclic phosphate + choline</text>
        <dbReference type="Rhea" id="RHEA:60652"/>
        <dbReference type="ChEBI" id="CHEBI:15354"/>
        <dbReference type="ChEBI" id="CHEBI:64583"/>
        <dbReference type="ChEBI" id="CHEBI:143892"/>
    </reaction>
</comment>
<comment type="catalytic activity">
    <reaction evidence="1">
        <text>an N-(acyl)-sphingosylphosphoethanolamine = an N-(acyl)-sphingosyl-1,3-cyclic phosphate + ethanolamine</text>
        <dbReference type="Rhea" id="RHEA:60648"/>
        <dbReference type="ChEBI" id="CHEBI:57603"/>
        <dbReference type="ChEBI" id="CHEBI:143891"/>
        <dbReference type="ChEBI" id="CHEBI:143892"/>
    </reaction>
</comment>
<comment type="catalytic activity">
    <reaction evidence="1">
        <text>a 1-acyl-sn-glycero-3-phosphocholine = a 1-acyl-sn-glycero-2,3-cyclic phosphate + choline</text>
        <dbReference type="Rhea" id="RHEA:60700"/>
        <dbReference type="ChEBI" id="CHEBI:15354"/>
        <dbReference type="ChEBI" id="CHEBI:58168"/>
        <dbReference type="ChEBI" id="CHEBI:143947"/>
    </reaction>
</comment>
<comment type="catalytic activity">
    <reaction evidence="1">
        <text>a 1-acyl-sn-glycero-3-phosphoethanolamine = a 1-acyl-sn-glycero-2,3-cyclic phosphate + ethanolamine</text>
        <dbReference type="Rhea" id="RHEA:60704"/>
        <dbReference type="ChEBI" id="CHEBI:57603"/>
        <dbReference type="ChEBI" id="CHEBI:64381"/>
        <dbReference type="ChEBI" id="CHEBI:143947"/>
    </reaction>
</comment>
<comment type="cofactor">
    <cofactor evidence="5">
        <name>Mg(2+)</name>
        <dbReference type="ChEBI" id="CHEBI:18420"/>
    </cofactor>
    <text evidence="5">Binds 1 Mg(2+) ion per subunit.</text>
</comment>
<comment type="subcellular location">
    <subcellularLocation>
        <location evidence="8">Secreted</location>
    </subcellularLocation>
</comment>
<comment type="tissue specificity">
    <text evidence="8">Expressed by the venom gland.</text>
</comment>
<comment type="similarity">
    <text evidence="7">Belongs to the arthropod phospholipase D family. Class II subfamily.</text>
</comment>
<comment type="caution">
    <text evidence="1 2 4">The most common activity assay for dermonecrotic toxins detects enzymatic activity by monitoring choline release from substrate. Liberation of choline from sphingomyelin (SM) or lysophosphatidylcholine (LPC) is commonly assumed to result from substrate hydrolysis, giving either ceramide-1-phosphate (C1P) or lysophosphatidic acid (LPA), respectively, as a second product. However, two studies from Lajoie and colleagues (2013 and 2015) report the observation of exclusive formation of cyclic phosphate products as second products, resulting from intramolecular transphosphatidylation. Cyclic phosphates have vastly different biological properties from their monoester counterparts, and they may be relevant to the pathology of brown spider envenomation.</text>
</comment>
<sequence>WIMGHMVNEIYQIDEFVDLGANSIETDVRFDDNAMAEYTFHGVPCDCRRWCHKWEYINTFLEGLRRATTPGDSKYRSELILVVFDLKTSQLSSSNAYKGGKLFAEKLLRYYWNGGNNGGRAYIILSIPKIDHYAFISGFRDALKESKHEDLLAKVGYDFSGNDDLDSIRSALNKAGVKDKEHVWQSDGITNCIARNLNRVREAVQNRDSANGYINKVYYWTIEKYVSVRDALNAEVDGIMTNYPNVIVNVLNEDNFRNRFRMATFEDNPWEHFTR</sequence>
<name>A41_LOXRU</name>